<comment type="function">
    <text evidence="1">Plays an essential role in viral RNA transcription and replication by forming the heterotrimeric polymerase complex together with PB1 and PB2 subunits. The complex transcribes viral mRNAs by using a unique mechanism called cap-snatching. It consists in the hijacking and cleavage of host capped pre-mRNAs. These short capped RNAs are then used as primers for viral mRNAs. The PB2 subunit is responsible for the binding of the 5' cap of cellular pre-mRNAs which are subsequently cleaved after 10-13 nucleotides by the PA subunit that carries the endonuclease activity.</text>
</comment>
<comment type="cofactor">
    <cofactor evidence="1">
        <name>Mn(2+)</name>
        <dbReference type="ChEBI" id="CHEBI:29035"/>
    </cofactor>
    <text evidence="1">Binds 2 manganese ions per subunit.</text>
</comment>
<comment type="subunit">
    <text evidence="1">Influenza RNA polymerase is composed of three subunits: PB1, PB2 and PA. Interacts (via C-terminus) with PB1 (via N-terminus).</text>
</comment>
<comment type="subcellular location">
    <subcellularLocation>
        <location evidence="1">Host cytoplasm</location>
    </subcellularLocation>
    <subcellularLocation>
        <location evidence="1">Host nucleus</location>
    </subcellularLocation>
    <text evidence="1">PB1 and PA are transported in the host nucleus as a complex.</text>
</comment>
<comment type="alternative products">
    <event type="ribosomal frameshifting"/>
    <isoform>
        <id>Q6DNW3-1</id>
        <name>PA</name>
        <sequence type="displayed"/>
    </isoform>
    <isoform>
        <id>Q6DNW3-2</id>
        <name>PA-X</name>
        <sequence type="not described"/>
    </isoform>
</comment>
<comment type="PTM">
    <text evidence="1">Phosphorylated on serines and threonines by host kinases, including human casein kinase II.</text>
</comment>
<comment type="similarity">
    <text evidence="1">Belongs to the influenza viruses PA family.</text>
</comment>
<reference key="1">
    <citation type="journal article" date="2004" name="Nature">
        <title>Genesis of a highly pathogenic and potentially pandemic H5N1 influenza virus in eastern Asia.</title>
        <authorList>
            <person name="Li K.S."/>
            <person name="Guan Y."/>
            <person name="Wang J."/>
            <person name="Smith G.J.D."/>
            <person name="Xu K.M."/>
            <person name="Duan L."/>
            <person name="Rahardjo A.P."/>
            <person name="Puthavathana P."/>
            <person name="Buranathai C."/>
            <person name="Nguyen T.D."/>
            <person name="Estoepangestie A.T.S."/>
            <person name="Chaisingh A."/>
            <person name="Auewarakul P."/>
            <person name="Long H.T."/>
            <person name="Hanh N.T.H."/>
            <person name="Webby R.J."/>
            <person name="Poon L.L.M."/>
            <person name="Chen H."/>
            <person name="Shortridge K.F."/>
            <person name="Yuen K.Y."/>
            <person name="Webster R.G."/>
            <person name="Peiris J.S.M."/>
        </authorList>
    </citation>
    <scope>NUCLEOTIDE SEQUENCE [GENOMIC RNA]</scope>
</reference>
<reference key="2">
    <citation type="submission" date="2008-03" db="EMBL/GenBank/DDBJ databases">
        <authorList>
            <person name="Li K.S."/>
            <person name="Guan Y."/>
            <person name="Wang J."/>
            <person name="Smith G.J.D."/>
            <person name="Xu K.M."/>
            <person name="Duan L."/>
            <person name="Rahardjo A.P."/>
            <person name="Puthavathana P."/>
            <person name="Buranathai C."/>
            <person name="Nguyen T.D."/>
            <person name="Estoepangestie A.T.S."/>
            <person name="Chaisingh A."/>
            <person name="Auewarakul P."/>
            <person name="Long H.T."/>
            <person name="Hanh N.T.H."/>
            <person name="Lim W."/>
            <person name="Webby R.J."/>
            <person name="Poon L.L.M."/>
            <person name="Chen H."/>
            <person name="Shortridge K.F."/>
            <person name="Yuen K.Y."/>
            <person name="Webster R.G."/>
            <person name="Peiris J.S.M."/>
        </authorList>
    </citation>
    <scope>SEQUENCE REVISION</scope>
</reference>
<name>PA_I02A7</name>
<protein>
    <recommendedName>
        <fullName evidence="1">Polymerase acidic protein</fullName>
        <ecNumber evidence="1">3.1.-.-</ecNumber>
    </recommendedName>
    <alternativeName>
        <fullName evidence="1">RNA-directed RNA polymerase subunit P2</fullName>
    </alternativeName>
</protein>
<gene>
    <name evidence="1" type="primary">PA</name>
</gene>
<feature type="chain" id="PRO_0000311139" description="Polymerase acidic protein">
    <location>
        <begin position="1" status="less than"/>
        <end position="709"/>
    </location>
</feature>
<feature type="short sequence motif" description="Nuclear localization signal 1 (NLS1)" evidence="1">
    <location>
        <begin position="117"/>
        <end position="132"/>
    </location>
</feature>
<feature type="short sequence motif" description="Nuclear localization signal 2 (NLS2)" evidence="1">
    <location>
        <begin position="177"/>
        <end position="240"/>
    </location>
</feature>
<feature type="binding site" evidence="1">
    <location>
        <position position="34"/>
    </location>
    <ligand>
        <name>Mn(2+)</name>
        <dbReference type="ChEBI" id="CHEBI:29035"/>
        <label>1</label>
    </ligand>
</feature>
<feature type="binding site" evidence="1">
    <location>
        <position position="73"/>
    </location>
    <ligand>
        <name>Mn(2+)</name>
        <dbReference type="ChEBI" id="CHEBI:29035"/>
        <label>2</label>
    </ligand>
</feature>
<feature type="binding site" evidence="1">
    <location>
        <position position="101"/>
    </location>
    <ligand>
        <name>Mn(2+)</name>
        <dbReference type="ChEBI" id="CHEBI:29035"/>
        <label>1</label>
    </ligand>
</feature>
<feature type="binding site" evidence="1">
    <location>
        <position position="101"/>
    </location>
    <ligand>
        <name>Mn(2+)</name>
        <dbReference type="ChEBI" id="CHEBI:29035"/>
        <label>2</label>
    </ligand>
</feature>
<feature type="binding site" evidence="1">
    <location>
        <position position="112"/>
    </location>
    <ligand>
        <name>Mn(2+)</name>
        <dbReference type="ChEBI" id="CHEBI:29035"/>
        <label>1</label>
    </ligand>
</feature>
<feature type="binding site" evidence="1">
    <location>
        <position position="113"/>
    </location>
    <ligand>
        <name>Mn(2+)</name>
        <dbReference type="ChEBI" id="CHEBI:29035"/>
        <label>1</label>
    </ligand>
</feature>
<feature type="non-terminal residue">
    <location>
        <position position="1"/>
    </location>
</feature>
<sequence length="709" mass="81556">CFNPMIVELAEKAMKEYGEDPKIETNKFAAICTHLEVCFMYSDFHFIDERSESIIVESGDPNALLKHRFEIIEGRDRTMAWTVVNSICNTTGVEKPKFLPDLYDYKENRFIEIGVTRREVHTYYLEKANKIKSEKTHIHIFSFTGEEMATKADYTLDEESRARIKTRLFTIRQEMASRGLWDSFRQSERGEETIEEKFEITGTMRRLADQSLPPNFSSLENFRAYVDGFEPNGCIEGKLSQMSKEVNARIEPFLKTTPRPLRLPDGPPCSQRSKFLLMDALKLSIEDPSHEGEGIPLYDAIKCMKTFFGWKEPNIVKPHEKGINPNYLLAWKQVLAELQDIENEEKIPKTKNMKKTSQLKWALGENMAPEKVDFEDCKDVSDLRQYDSDEPESRSLASWIQSEFNKACELTDSSWIELDEIGEDVAPIEHIASMRRNYFTAEVSHCRATEYIMKGVYMNTALLNASCAAMDDFQLIPMISKCRTKEGRRKTNLYGFIIKGRSHLRNDTDVVNFVSMEFSLTDPRLEPHKWEKYCVLEIGDMLLRTAVGQVSRPMFLYVRTNGTSKIKMKWGMEMRRCLLQSLQQIESMIEAESSVKEKDMTKEFFENKSETWPIGESPKGVEEGSIGKVCRTLLAKSVFNSLYASPQLEGFSAESRKLLLIAQALRDNLEPGTFDLGGLYEAVEECLINDPWVLLNASWFNSFLAHALK</sequence>
<organism>
    <name type="scientific">Influenza A virus (strain A/Teal/China/2978.1/2002 H5N1 genotype W)</name>
    <dbReference type="NCBI Taxonomy" id="284215"/>
    <lineage>
        <taxon>Viruses</taxon>
        <taxon>Riboviria</taxon>
        <taxon>Orthornavirae</taxon>
        <taxon>Negarnaviricota</taxon>
        <taxon>Polyploviricotina</taxon>
        <taxon>Insthoviricetes</taxon>
        <taxon>Articulavirales</taxon>
        <taxon>Orthomyxoviridae</taxon>
        <taxon>Alphainfluenzavirus</taxon>
        <taxon>Alphainfluenzavirus influenzae</taxon>
        <taxon>Influenza A virus</taxon>
    </lineage>
</organism>
<dbReference type="EC" id="3.1.-.-" evidence="1"/>
<dbReference type="EMBL" id="AY651639">
    <property type="protein sequence ID" value="AAT74515.2"/>
    <property type="molecule type" value="Genomic_RNA"/>
</dbReference>
<dbReference type="SMR" id="Q6DNW3"/>
<dbReference type="GO" id="GO:0030430">
    <property type="term" value="C:host cell cytoplasm"/>
    <property type="evidence" value="ECO:0007669"/>
    <property type="project" value="UniProtKB-SubCell"/>
</dbReference>
<dbReference type="GO" id="GO:0042025">
    <property type="term" value="C:host cell nucleus"/>
    <property type="evidence" value="ECO:0007669"/>
    <property type="project" value="UniProtKB-SubCell"/>
</dbReference>
<dbReference type="GO" id="GO:0004519">
    <property type="term" value="F:endonuclease activity"/>
    <property type="evidence" value="ECO:0007669"/>
    <property type="project" value="UniProtKB-KW"/>
</dbReference>
<dbReference type="GO" id="GO:0046872">
    <property type="term" value="F:metal ion binding"/>
    <property type="evidence" value="ECO:0007669"/>
    <property type="project" value="UniProtKB-KW"/>
</dbReference>
<dbReference type="GO" id="GO:0003723">
    <property type="term" value="F:RNA binding"/>
    <property type="evidence" value="ECO:0007669"/>
    <property type="project" value="InterPro"/>
</dbReference>
<dbReference type="GO" id="GO:0075526">
    <property type="term" value="P:cap snatching"/>
    <property type="evidence" value="ECO:0007669"/>
    <property type="project" value="UniProtKB-KW"/>
</dbReference>
<dbReference type="GO" id="GO:0039657">
    <property type="term" value="P:symbiont-mediated suppression of host gene expression"/>
    <property type="evidence" value="ECO:0007669"/>
    <property type="project" value="UniProtKB-KW"/>
</dbReference>
<dbReference type="GO" id="GO:0039523">
    <property type="term" value="P:symbiont-mediated suppression of host mRNA transcription via inhibition of RNA polymerase II activity"/>
    <property type="evidence" value="ECO:0007669"/>
    <property type="project" value="UniProtKB-KW"/>
</dbReference>
<dbReference type="GO" id="GO:0039694">
    <property type="term" value="P:viral RNA genome replication"/>
    <property type="evidence" value="ECO:0007669"/>
    <property type="project" value="InterPro"/>
</dbReference>
<dbReference type="GO" id="GO:0075523">
    <property type="term" value="P:viral translational frameshifting"/>
    <property type="evidence" value="ECO:0007669"/>
    <property type="project" value="UniProtKB-KW"/>
</dbReference>
<dbReference type="FunFam" id="3.40.91.90:FF:000001">
    <property type="entry name" value="Polymerase acidic protein"/>
    <property type="match status" value="1"/>
</dbReference>
<dbReference type="Gene3D" id="3.40.91.90">
    <property type="entry name" value="Influenza RNA-dependent RNA polymerase subunit PA, endonuclease domain"/>
    <property type="match status" value="1"/>
</dbReference>
<dbReference type="HAMAP" id="MF_04063">
    <property type="entry name" value="INFV_PA"/>
    <property type="match status" value="1"/>
</dbReference>
<dbReference type="InterPro" id="IPR037534">
    <property type="entry name" value="INFV_PA"/>
</dbReference>
<dbReference type="InterPro" id="IPR001009">
    <property type="entry name" value="PA/PA-X"/>
</dbReference>
<dbReference type="InterPro" id="IPR038372">
    <property type="entry name" value="PA/PA-X_sf"/>
</dbReference>
<dbReference type="Pfam" id="PF00603">
    <property type="entry name" value="Flu_PA"/>
    <property type="match status" value="1"/>
</dbReference>
<organismHost>
    <name type="scientific">Aves</name>
    <dbReference type="NCBI Taxonomy" id="8782"/>
</organismHost>
<organismHost>
    <name type="scientific">Felis catus</name>
    <name type="common">Cat</name>
    <name type="synonym">Felis silvestris catus</name>
    <dbReference type="NCBI Taxonomy" id="9685"/>
</organismHost>
<organismHost>
    <name type="scientific">Homo sapiens</name>
    <name type="common">Human</name>
    <dbReference type="NCBI Taxonomy" id="9606"/>
</organismHost>
<organismHost>
    <name type="scientific">Panthera pardus</name>
    <name type="common">Leopard</name>
    <name type="synonym">Felis pardus</name>
    <dbReference type="NCBI Taxonomy" id="9691"/>
</organismHost>
<organismHost>
    <name type="scientific">Panthera tigris</name>
    <name type="common">Tiger</name>
    <dbReference type="NCBI Taxonomy" id="9694"/>
</organismHost>
<organismHost>
    <name type="scientific">Sus scrofa</name>
    <name type="common">Pig</name>
    <dbReference type="NCBI Taxonomy" id="9823"/>
</organismHost>
<evidence type="ECO:0000255" key="1">
    <source>
        <dbReference type="HAMAP-Rule" id="MF_04063"/>
    </source>
</evidence>
<accession>Q6DNW3</accession>
<proteinExistence type="inferred from homology"/>
<keyword id="KW-1157">Cap snatching</keyword>
<keyword id="KW-0255">Endonuclease</keyword>
<keyword id="KW-1262">Eukaryotic host gene expression shutoff by virus</keyword>
<keyword id="KW-1191">Eukaryotic host transcription shutoff by virus</keyword>
<keyword id="KW-1035">Host cytoplasm</keyword>
<keyword id="KW-1190">Host gene expression shutoff by virus</keyword>
<keyword id="KW-1048">Host nucleus</keyword>
<keyword id="KW-0945">Host-virus interaction</keyword>
<keyword id="KW-0378">Hydrolase</keyword>
<keyword id="KW-1104">Inhibition of host RNA polymerase II by virus</keyword>
<keyword id="KW-0464">Manganese</keyword>
<keyword id="KW-0479">Metal-binding</keyword>
<keyword id="KW-0540">Nuclease</keyword>
<keyword id="KW-0597">Phosphoprotein</keyword>
<keyword id="KW-0688">Ribosomal frameshifting</keyword>